<organism>
    <name type="scientific">Mannheimia succiniciproducens (strain KCTC 0769BP / MBEL55E)</name>
    <dbReference type="NCBI Taxonomy" id="221988"/>
    <lineage>
        <taxon>Bacteria</taxon>
        <taxon>Pseudomonadati</taxon>
        <taxon>Pseudomonadota</taxon>
        <taxon>Gammaproteobacteria</taxon>
        <taxon>Pasteurellales</taxon>
        <taxon>Pasteurellaceae</taxon>
        <taxon>Basfia</taxon>
    </lineage>
</organism>
<accession>Q65TC2</accession>
<evidence type="ECO:0000255" key="1">
    <source>
        <dbReference type="HAMAP-Rule" id="MF_00473"/>
    </source>
</evidence>
<proteinExistence type="inferred from homology"/>
<name>G6PI_MANSM</name>
<dbReference type="EC" id="5.3.1.9" evidence="1"/>
<dbReference type="EMBL" id="AE016827">
    <property type="protein sequence ID" value="AAU37788.1"/>
    <property type="molecule type" value="Genomic_DNA"/>
</dbReference>
<dbReference type="RefSeq" id="WP_011200355.1">
    <property type="nucleotide sequence ID" value="NC_006300.1"/>
</dbReference>
<dbReference type="SMR" id="Q65TC2"/>
<dbReference type="STRING" id="221988.MS1181"/>
<dbReference type="KEGG" id="msu:MS1181"/>
<dbReference type="eggNOG" id="COG0166">
    <property type="taxonomic scope" value="Bacteria"/>
</dbReference>
<dbReference type="HOGENOM" id="CLU_017947_3_1_6"/>
<dbReference type="OrthoDB" id="140919at2"/>
<dbReference type="UniPathway" id="UPA00109">
    <property type="reaction ID" value="UER00181"/>
</dbReference>
<dbReference type="UniPathway" id="UPA00138"/>
<dbReference type="Proteomes" id="UP000000607">
    <property type="component" value="Chromosome"/>
</dbReference>
<dbReference type="GO" id="GO:0005829">
    <property type="term" value="C:cytosol"/>
    <property type="evidence" value="ECO:0007669"/>
    <property type="project" value="TreeGrafter"/>
</dbReference>
<dbReference type="GO" id="GO:0097367">
    <property type="term" value="F:carbohydrate derivative binding"/>
    <property type="evidence" value="ECO:0007669"/>
    <property type="project" value="InterPro"/>
</dbReference>
<dbReference type="GO" id="GO:0004347">
    <property type="term" value="F:glucose-6-phosphate isomerase activity"/>
    <property type="evidence" value="ECO:0007669"/>
    <property type="project" value="UniProtKB-UniRule"/>
</dbReference>
<dbReference type="GO" id="GO:0048029">
    <property type="term" value="F:monosaccharide binding"/>
    <property type="evidence" value="ECO:0007669"/>
    <property type="project" value="TreeGrafter"/>
</dbReference>
<dbReference type="GO" id="GO:0006094">
    <property type="term" value="P:gluconeogenesis"/>
    <property type="evidence" value="ECO:0007669"/>
    <property type="project" value="UniProtKB-UniRule"/>
</dbReference>
<dbReference type="GO" id="GO:0051156">
    <property type="term" value="P:glucose 6-phosphate metabolic process"/>
    <property type="evidence" value="ECO:0007669"/>
    <property type="project" value="TreeGrafter"/>
</dbReference>
<dbReference type="GO" id="GO:0006096">
    <property type="term" value="P:glycolytic process"/>
    <property type="evidence" value="ECO:0007669"/>
    <property type="project" value="UniProtKB-UniRule"/>
</dbReference>
<dbReference type="CDD" id="cd05015">
    <property type="entry name" value="SIS_PGI_1"/>
    <property type="match status" value="1"/>
</dbReference>
<dbReference type="CDD" id="cd05016">
    <property type="entry name" value="SIS_PGI_2"/>
    <property type="match status" value="1"/>
</dbReference>
<dbReference type="FunFam" id="1.10.1390.10:FF:000001">
    <property type="entry name" value="Glucose-6-phosphate isomerase"/>
    <property type="match status" value="1"/>
</dbReference>
<dbReference type="FunFam" id="3.40.50.10490:FF:000004">
    <property type="entry name" value="Glucose-6-phosphate isomerase"/>
    <property type="match status" value="1"/>
</dbReference>
<dbReference type="Gene3D" id="1.10.1390.10">
    <property type="match status" value="1"/>
</dbReference>
<dbReference type="Gene3D" id="3.40.50.10490">
    <property type="entry name" value="Glucose-6-phosphate isomerase like protein, domain 1"/>
    <property type="match status" value="2"/>
</dbReference>
<dbReference type="HAMAP" id="MF_00473">
    <property type="entry name" value="G6P_isomerase"/>
    <property type="match status" value="1"/>
</dbReference>
<dbReference type="InterPro" id="IPR001672">
    <property type="entry name" value="G6P_Isomerase"/>
</dbReference>
<dbReference type="InterPro" id="IPR023096">
    <property type="entry name" value="G6P_Isomerase_C"/>
</dbReference>
<dbReference type="InterPro" id="IPR018189">
    <property type="entry name" value="Phosphoglucose_isomerase_CS"/>
</dbReference>
<dbReference type="InterPro" id="IPR046348">
    <property type="entry name" value="SIS_dom_sf"/>
</dbReference>
<dbReference type="InterPro" id="IPR035476">
    <property type="entry name" value="SIS_PGI_1"/>
</dbReference>
<dbReference type="InterPro" id="IPR035482">
    <property type="entry name" value="SIS_PGI_2"/>
</dbReference>
<dbReference type="NCBIfam" id="NF001211">
    <property type="entry name" value="PRK00179.1"/>
    <property type="match status" value="1"/>
</dbReference>
<dbReference type="PANTHER" id="PTHR11469">
    <property type="entry name" value="GLUCOSE-6-PHOSPHATE ISOMERASE"/>
    <property type="match status" value="1"/>
</dbReference>
<dbReference type="PANTHER" id="PTHR11469:SF1">
    <property type="entry name" value="GLUCOSE-6-PHOSPHATE ISOMERASE"/>
    <property type="match status" value="1"/>
</dbReference>
<dbReference type="Pfam" id="PF00342">
    <property type="entry name" value="PGI"/>
    <property type="match status" value="1"/>
</dbReference>
<dbReference type="PRINTS" id="PR00662">
    <property type="entry name" value="G6PISOMERASE"/>
</dbReference>
<dbReference type="SUPFAM" id="SSF53697">
    <property type="entry name" value="SIS domain"/>
    <property type="match status" value="1"/>
</dbReference>
<dbReference type="PROSITE" id="PS00765">
    <property type="entry name" value="P_GLUCOSE_ISOMERASE_1"/>
    <property type="match status" value="1"/>
</dbReference>
<dbReference type="PROSITE" id="PS00174">
    <property type="entry name" value="P_GLUCOSE_ISOMERASE_2"/>
    <property type="match status" value="1"/>
</dbReference>
<dbReference type="PROSITE" id="PS51463">
    <property type="entry name" value="P_GLUCOSE_ISOMERASE_3"/>
    <property type="match status" value="1"/>
</dbReference>
<feature type="chain" id="PRO_0000180670" description="Glucose-6-phosphate isomerase">
    <location>
        <begin position="1"/>
        <end position="549"/>
    </location>
</feature>
<feature type="active site" description="Proton donor" evidence="1">
    <location>
        <position position="355"/>
    </location>
</feature>
<feature type="active site" evidence="1">
    <location>
        <position position="387"/>
    </location>
</feature>
<feature type="active site" evidence="1">
    <location>
        <position position="515"/>
    </location>
</feature>
<keyword id="KW-0963">Cytoplasm</keyword>
<keyword id="KW-0312">Gluconeogenesis</keyword>
<keyword id="KW-0324">Glycolysis</keyword>
<keyword id="KW-0413">Isomerase</keyword>
<sequence length="549" mass="61349">MQNINPTSTAAWKALEAHKGTLENTTINDLFQQEKNRFADYSLTFNNEILVDFSKNKITRETLNLLRRLAKECALDEAKEAMFSGEKINRTENRAVLHTALRNRSNTAVLVDGKDVMPEVNEVLAKMKAFSERVISGEWKGYTGKAITDVVNIGIGGSDLGPYMVTEALRPYKNHLNMHFVSNVDGTHIAEVFKKTNPETTLFLVASKTFTTQETMTNAKSARDWFLATAKDEKHVAKHFAALSTNAAEVEKFGIDTDNMFGFWDWVGGRYSLWSAIGLSIILSVGFENFEALLSGAHEMDKHFRNTPIEQNIPATLALVGLWNTNFQGAQTEAILPYDQYMHRFAAYFQQGNMESNGKYVGRDGKVISNYQTGPIIWGEPGTNGQHAFYQLIHQGTTLIPCDFIAPAKTHNPLADHHNKLLSNFFAQTEALAFGKTKETVEAEFLKAGKSLDEVKDVVPFKVFAGNKPTNSILLQEITPFSLGALIAMYEHKIFVQGVIFNIFSFDQWGVELGKQLANRILPELSGDEQVTGHDSSTNGLINQFKAWR</sequence>
<protein>
    <recommendedName>
        <fullName evidence="1">Glucose-6-phosphate isomerase</fullName>
        <shortName evidence="1">GPI</shortName>
        <ecNumber evidence="1">5.3.1.9</ecNumber>
    </recommendedName>
    <alternativeName>
        <fullName evidence="1">Phosphoglucose isomerase</fullName>
        <shortName evidence="1">PGI</shortName>
    </alternativeName>
    <alternativeName>
        <fullName evidence="1">Phosphohexose isomerase</fullName>
        <shortName evidence="1">PHI</shortName>
    </alternativeName>
</protein>
<reference key="1">
    <citation type="journal article" date="2004" name="Nat. Biotechnol.">
        <title>The genome sequence of the capnophilic rumen bacterium Mannheimia succiniciproducens.</title>
        <authorList>
            <person name="Hong S.H."/>
            <person name="Kim J.S."/>
            <person name="Lee S.Y."/>
            <person name="In Y.H."/>
            <person name="Choi S.S."/>
            <person name="Rih J.-K."/>
            <person name="Kim C.H."/>
            <person name="Jeong H."/>
            <person name="Hur C.G."/>
            <person name="Kim J.J."/>
        </authorList>
    </citation>
    <scope>NUCLEOTIDE SEQUENCE [LARGE SCALE GENOMIC DNA]</scope>
    <source>
        <strain>KCTC 0769BP / MBEL55E</strain>
    </source>
</reference>
<gene>
    <name evidence="1" type="primary">pgi</name>
    <name type="ordered locus">MS1181</name>
</gene>
<comment type="function">
    <text evidence="1">Catalyzes the reversible isomerization of glucose-6-phosphate to fructose-6-phosphate.</text>
</comment>
<comment type="catalytic activity">
    <reaction evidence="1">
        <text>alpha-D-glucose 6-phosphate = beta-D-fructose 6-phosphate</text>
        <dbReference type="Rhea" id="RHEA:11816"/>
        <dbReference type="ChEBI" id="CHEBI:57634"/>
        <dbReference type="ChEBI" id="CHEBI:58225"/>
        <dbReference type="EC" id="5.3.1.9"/>
    </reaction>
</comment>
<comment type="pathway">
    <text evidence="1">Carbohydrate biosynthesis; gluconeogenesis.</text>
</comment>
<comment type="pathway">
    <text evidence="1">Carbohydrate degradation; glycolysis; D-glyceraldehyde 3-phosphate and glycerone phosphate from D-glucose: step 2/4.</text>
</comment>
<comment type="subcellular location">
    <subcellularLocation>
        <location evidence="1">Cytoplasm</location>
    </subcellularLocation>
</comment>
<comment type="similarity">
    <text evidence="1">Belongs to the GPI family.</text>
</comment>